<keyword id="KW-1003">Cell membrane</keyword>
<keyword id="KW-0325">Glycoprotein</keyword>
<keyword id="KW-0336">GPI-anchor</keyword>
<keyword id="KW-0449">Lipoprotein</keyword>
<keyword id="KW-0472">Membrane</keyword>
<keyword id="KW-0821">Trypanosomiasis</keyword>
<protein>
    <recommendedName>
        <fullName>Variant surface glycoprotein 7</fullName>
        <shortName>VSG 7</shortName>
    </recommendedName>
    <alternativeName>
        <fullName>Metacyclic variable antigen</fullName>
    </alternativeName>
</protein>
<feature type="chain" id="PRO_0000036443" description="Variant surface glycoprotein 7">
    <location>
        <begin position="1" status="less than"/>
        <end position="444"/>
    </location>
</feature>
<feature type="propeptide" id="PRO_0000036444" description="Removed in mature form" evidence="1">
    <location>
        <begin position="445"/>
        <end position="467"/>
    </location>
</feature>
<feature type="region of interest" description="Disordered" evidence="3">
    <location>
        <begin position="77"/>
        <end position="133"/>
    </location>
</feature>
<feature type="region of interest" description="Disordered" evidence="3">
    <location>
        <begin position="382"/>
        <end position="407"/>
    </location>
</feature>
<feature type="compositionally biased region" description="Polar residues" evidence="3">
    <location>
        <begin position="77"/>
        <end position="87"/>
    </location>
</feature>
<feature type="compositionally biased region" description="Basic residues" evidence="3">
    <location>
        <begin position="93"/>
        <end position="103"/>
    </location>
</feature>
<feature type="compositionally biased region" description="Polar residues" evidence="3">
    <location>
        <begin position="107"/>
        <end position="116"/>
    </location>
</feature>
<feature type="lipid moiety-binding region" description="GPI-anchor amidated aspartate" evidence="1">
    <location>
        <position position="444"/>
    </location>
</feature>
<feature type="glycosylation site" description="N-linked (GlcNAc...) asparagine" evidence="2">
    <location>
        <position position="108"/>
    </location>
</feature>
<feature type="glycosylation site" description="N-linked (GlcNAc...) asparagine" evidence="2">
    <location>
        <position position="252"/>
    </location>
</feature>
<feature type="glycosylation site" description="N-linked (GlcNAc...) asparagine" evidence="2">
    <location>
        <position position="416"/>
    </location>
</feature>
<feature type="non-consecutive residues" evidence="4">
    <location>
        <begin position="87"/>
        <end position="88"/>
    </location>
</feature>
<feature type="non-terminal residue">
    <location>
        <position position="1"/>
    </location>
</feature>
<organism>
    <name type="scientific">Trypanosoma brucei rhodesiense</name>
    <dbReference type="NCBI Taxonomy" id="31286"/>
    <lineage>
        <taxon>Eukaryota</taxon>
        <taxon>Discoba</taxon>
        <taxon>Euglenozoa</taxon>
        <taxon>Kinetoplastea</taxon>
        <taxon>Metakinetoplastina</taxon>
        <taxon>Trypanosomatida</taxon>
        <taxon>Trypanosomatidae</taxon>
        <taxon>Trypanosoma</taxon>
    </lineage>
</organism>
<evidence type="ECO:0000250" key="1"/>
<evidence type="ECO:0000255" key="2"/>
<evidence type="ECO:0000256" key="3">
    <source>
        <dbReference type="SAM" id="MobiDB-lite"/>
    </source>
</evidence>
<evidence type="ECO:0000305" key="4"/>
<sequence>SEPTMSTRVQQATSCVLLIIGCTNYAASKQQTENNAVCDTPCKCLGRLAVQKAYLEGALEHARQSIKAFASSSRQHTIAAGATNTKLSGHHPNQGRRGRRRSSSARPNNSKGNSPSKRAGGAVRGETPASGRLKAAKLLKSSNYETATFTPTEMTIQNRRACEQVDESKEYRFDELNFDKEQGIPTPALTLEISMGCQKNPGDTGGACDGTNADDGVVTKLTFTTAAPVAETSPLVAGAYKKTSKASLSISNRTEEGRVANSKAAHEAAKRLMAIKQPSDLSTYTDDSSFALLVGQLAMKPPLGAELTPALRDQVNKFITDNYGANEGDFRSKFLAKTEQAAVFYLDGKSKKTKKISELESKSELVTASGYAFFKGIHTEQAEKVENPRSQGNPETAENKKEGGNTAKPFCSTIQNQTECEGVKGTPPTGKAKVCGWIEGKCQDSSFLLSKQFALSVVSAAFAALLF</sequence>
<proteinExistence type="inferred from homology"/>
<dbReference type="PIR" id="A03393">
    <property type="entry name" value="VMUT7R"/>
</dbReference>
<dbReference type="SMR" id="P02898"/>
<dbReference type="GO" id="GO:0005886">
    <property type="term" value="C:plasma membrane"/>
    <property type="evidence" value="ECO:0007669"/>
    <property type="project" value="UniProtKB-SubCell"/>
</dbReference>
<dbReference type="GO" id="GO:0098552">
    <property type="term" value="C:side of membrane"/>
    <property type="evidence" value="ECO:0007669"/>
    <property type="project" value="UniProtKB-KW"/>
</dbReference>
<dbReference type="InterPro" id="IPR019609">
    <property type="entry name" value="Variant_surf_glycoprt_trypan_C"/>
</dbReference>
<dbReference type="Pfam" id="PF10659">
    <property type="entry name" value="Trypan_glycop_C"/>
    <property type="match status" value="1"/>
</dbReference>
<dbReference type="SUPFAM" id="SSF58087">
    <property type="entry name" value="Variant surface glycoprotein (N-terminal domain)"/>
    <property type="match status" value="1"/>
</dbReference>
<name>VSG7_TRYBR</name>
<comment type="function">
    <text>VSG forms a coat on the surface of the parasite. The trypanosome evades the immune response of the host by expressing a series of antigenically distinct VSGs from an estimated 1000 VSG genes.</text>
</comment>
<comment type="subcellular location">
    <subcellularLocation>
        <location>Cell membrane</location>
        <topology>Lipid-anchor</topology>
        <topology>GPI-anchor</topology>
    </subcellularLocation>
    <text evidence="1">A soluble form is released from ruptured cells by the action of a PI-PLC.</text>
</comment>
<accession>P02898</accession>
<reference key="1">
    <citation type="journal article" date="1984" name="Proc. Natl. Acad. Sci. U.S.A.">
        <title>Characterization of the genes specifying two metacyclic variable antigen types in Trypanosoma brucei rhodesiense.</title>
        <authorList>
            <person name="Lenardo M.J."/>
            <person name="Rice-Ficht A.C."/>
            <person name="Kelly G."/>
            <person name="Esser K.M."/>
            <person name="Donelson J.E."/>
        </authorList>
    </citation>
    <scope>NUCLEOTIDE SEQUENCE</scope>
</reference>